<evidence type="ECO:0000255" key="1">
    <source>
        <dbReference type="HAMAP-Rule" id="MF_00171"/>
    </source>
</evidence>
<name>TRUA1_BACC1</name>
<gene>
    <name evidence="1" type="primary">truA1</name>
    <name type="ordered locus">BCE_0142</name>
</gene>
<proteinExistence type="inferred from homology"/>
<protein>
    <recommendedName>
        <fullName evidence="1">tRNA pseudouridine synthase A 1</fullName>
        <ecNumber evidence="1">5.4.99.12</ecNumber>
    </recommendedName>
    <alternativeName>
        <fullName evidence="1">tRNA pseudouridine(38-40) synthase</fullName>
    </alternativeName>
    <alternativeName>
        <fullName evidence="1">tRNA pseudouridylate synthase I 1</fullName>
    </alternativeName>
    <alternativeName>
        <fullName evidence="1">tRNA-uridine isomerase I 1</fullName>
    </alternativeName>
</protein>
<comment type="function">
    <text evidence="1">Formation of pseudouridine at positions 38, 39 and 40 in the anticodon stem and loop of transfer RNAs.</text>
</comment>
<comment type="catalytic activity">
    <reaction evidence="1">
        <text>uridine(38/39/40) in tRNA = pseudouridine(38/39/40) in tRNA</text>
        <dbReference type="Rhea" id="RHEA:22376"/>
        <dbReference type="Rhea" id="RHEA-COMP:10085"/>
        <dbReference type="Rhea" id="RHEA-COMP:10087"/>
        <dbReference type="ChEBI" id="CHEBI:65314"/>
        <dbReference type="ChEBI" id="CHEBI:65315"/>
        <dbReference type="EC" id="5.4.99.12"/>
    </reaction>
</comment>
<comment type="subunit">
    <text evidence="1">Homodimer.</text>
</comment>
<comment type="similarity">
    <text evidence="1">Belongs to the tRNA pseudouridine synthase TruA family.</text>
</comment>
<accession>Q73F64</accession>
<keyword id="KW-0413">Isomerase</keyword>
<keyword id="KW-0819">tRNA processing</keyword>
<feature type="chain" id="PRO_0000057321" description="tRNA pseudouridine synthase A 1">
    <location>
        <begin position="1"/>
        <end position="247"/>
    </location>
</feature>
<feature type="active site" description="Nucleophile" evidence="1">
    <location>
        <position position="53"/>
    </location>
</feature>
<feature type="binding site" evidence="1">
    <location>
        <position position="111"/>
    </location>
    <ligand>
        <name>substrate</name>
    </ligand>
</feature>
<organism>
    <name type="scientific">Bacillus cereus (strain ATCC 10987 / NRS 248)</name>
    <dbReference type="NCBI Taxonomy" id="222523"/>
    <lineage>
        <taxon>Bacteria</taxon>
        <taxon>Bacillati</taxon>
        <taxon>Bacillota</taxon>
        <taxon>Bacilli</taxon>
        <taxon>Bacillales</taxon>
        <taxon>Bacillaceae</taxon>
        <taxon>Bacillus</taxon>
        <taxon>Bacillus cereus group</taxon>
    </lineage>
</organism>
<dbReference type="EC" id="5.4.99.12" evidence="1"/>
<dbReference type="EMBL" id="AE017194">
    <property type="protein sequence ID" value="AAS39078.1"/>
    <property type="molecule type" value="Genomic_DNA"/>
</dbReference>
<dbReference type="SMR" id="Q73F64"/>
<dbReference type="KEGG" id="bca:BCE_0142"/>
<dbReference type="HOGENOM" id="CLU_014673_0_1_9"/>
<dbReference type="Proteomes" id="UP000002527">
    <property type="component" value="Chromosome"/>
</dbReference>
<dbReference type="GO" id="GO:0003723">
    <property type="term" value="F:RNA binding"/>
    <property type="evidence" value="ECO:0007669"/>
    <property type="project" value="InterPro"/>
</dbReference>
<dbReference type="GO" id="GO:0160147">
    <property type="term" value="F:tRNA pseudouridine(38-40) synthase activity"/>
    <property type="evidence" value="ECO:0007669"/>
    <property type="project" value="UniProtKB-EC"/>
</dbReference>
<dbReference type="GO" id="GO:0031119">
    <property type="term" value="P:tRNA pseudouridine synthesis"/>
    <property type="evidence" value="ECO:0007669"/>
    <property type="project" value="UniProtKB-UniRule"/>
</dbReference>
<dbReference type="CDD" id="cd02570">
    <property type="entry name" value="PseudoU_synth_EcTruA"/>
    <property type="match status" value="1"/>
</dbReference>
<dbReference type="FunFam" id="3.30.70.580:FF:000001">
    <property type="entry name" value="tRNA pseudouridine synthase A"/>
    <property type="match status" value="1"/>
</dbReference>
<dbReference type="FunFam" id="3.30.70.660:FF:000004">
    <property type="entry name" value="tRNA pseudouridine synthase A"/>
    <property type="match status" value="1"/>
</dbReference>
<dbReference type="Gene3D" id="3.30.70.660">
    <property type="entry name" value="Pseudouridine synthase I, catalytic domain, C-terminal subdomain"/>
    <property type="match status" value="1"/>
</dbReference>
<dbReference type="Gene3D" id="3.30.70.580">
    <property type="entry name" value="Pseudouridine synthase I, catalytic domain, N-terminal subdomain"/>
    <property type="match status" value="1"/>
</dbReference>
<dbReference type="HAMAP" id="MF_00171">
    <property type="entry name" value="TruA"/>
    <property type="match status" value="1"/>
</dbReference>
<dbReference type="InterPro" id="IPR020103">
    <property type="entry name" value="PsdUridine_synth_cat_dom_sf"/>
</dbReference>
<dbReference type="InterPro" id="IPR001406">
    <property type="entry name" value="PsdUridine_synth_TruA"/>
</dbReference>
<dbReference type="InterPro" id="IPR020097">
    <property type="entry name" value="PsdUridine_synth_TruA_a/b_dom"/>
</dbReference>
<dbReference type="InterPro" id="IPR020095">
    <property type="entry name" value="PsdUridine_synth_TruA_C"/>
</dbReference>
<dbReference type="InterPro" id="IPR020094">
    <property type="entry name" value="TruA/RsuA/RluB/E/F_N"/>
</dbReference>
<dbReference type="NCBIfam" id="TIGR00071">
    <property type="entry name" value="hisT_truA"/>
    <property type="match status" value="1"/>
</dbReference>
<dbReference type="PANTHER" id="PTHR11142">
    <property type="entry name" value="PSEUDOURIDYLATE SYNTHASE"/>
    <property type="match status" value="1"/>
</dbReference>
<dbReference type="PANTHER" id="PTHR11142:SF0">
    <property type="entry name" value="TRNA PSEUDOURIDINE SYNTHASE-LIKE 1"/>
    <property type="match status" value="1"/>
</dbReference>
<dbReference type="Pfam" id="PF01416">
    <property type="entry name" value="PseudoU_synth_1"/>
    <property type="match status" value="2"/>
</dbReference>
<dbReference type="PIRSF" id="PIRSF001430">
    <property type="entry name" value="tRNA_psdUrid_synth"/>
    <property type="match status" value="1"/>
</dbReference>
<dbReference type="SUPFAM" id="SSF55120">
    <property type="entry name" value="Pseudouridine synthase"/>
    <property type="match status" value="1"/>
</dbReference>
<sequence>MDRIKCTVAYDGMHFCGYQIQPQHRTVQQEIEKALQKLHKGELVRVQASGRTDSTVHAKGQVIHFDTPLSLEEWQWNNALNTMLPDDIVITQVEKKTEEFHARYGVERKEYRYRVLLSKTADVFRRNYVYQYPYPLEINAIRKAIPYFIGTHDFTSFCSAKTDKKDKVRTIYEIELIEQDDELIFRFVGNGFLYNMVRIIVGTLLSVGQGKLDPDSIPEILAKQNRQFAGKMAPGHGLYLWQVNYNN</sequence>
<reference key="1">
    <citation type="journal article" date="2004" name="Nucleic Acids Res.">
        <title>The genome sequence of Bacillus cereus ATCC 10987 reveals metabolic adaptations and a large plasmid related to Bacillus anthracis pXO1.</title>
        <authorList>
            <person name="Rasko D.A."/>
            <person name="Ravel J."/>
            <person name="Oekstad O.A."/>
            <person name="Helgason E."/>
            <person name="Cer R.Z."/>
            <person name="Jiang L."/>
            <person name="Shores K.A."/>
            <person name="Fouts D.E."/>
            <person name="Tourasse N.J."/>
            <person name="Angiuoli S.V."/>
            <person name="Kolonay J.F."/>
            <person name="Nelson W.C."/>
            <person name="Kolstoe A.-B."/>
            <person name="Fraser C.M."/>
            <person name="Read T.D."/>
        </authorList>
    </citation>
    <scope>NUCLEOTIDE SEQUENCE [LARGE SCALE GENOMIC DNA]</scope>
    <source>
        <strain>ATCC 10987 / NRS 248</strain>
    </source>
</reference>